<reference key="1">
    <citation type="journal article" date="2002" name="Proc. Natl. Acad. Sci. U.S.A.">
        <title>The genome sequence of Bifidobacterium longum reflects its adaptation to the human gastrointestinal tract.</title>
        <authorList>
            <person name="Schell M.A."/>
            <person name="Karmirantzou M."/>
            <person name="Snel B."/>
            <person name="Vilanova D."/>
            <person name="Berger B."/>
            <person name="Pessi G."/>
            <person name="Zwahlen M.-C."/>
            <person name="Desiere F."/>
            <person name="Bork P."/>
            <person name="Delley M."/>
            <person name="Pridmore R.D."/>
            <person name="Arigoni F."/>
        </authorList>
    </citation>
    <scope>NUCLEOTIDE SEQUENCE [LARGE SCALE GENOMIC DNA]</scope>
    <source>
        <strain>NCC 2705</strain>
    </source>
</reference>
<organism>
    <name type="scientific">Bifidobacterium longum (strain NCC 2705)</name>
    <dbReference type="NCBI Taxonomy" id="206672"/>
    <lineage>
        <taxon>Bacteria</taxon>
        <taxon>Bacillati</taxon>
        <taxon>Actinomycetota</taxon>
        <taxon>Actinomycetes</taxon>
        <taxon>Bifidobacteriales</taxon>
        <taxon>Bifidobacteriaceae</taxon>
        <taxon>Bifidobacterium</taxon>
    </lineage>
</organism>
<sequence length="183" mass="20129">MSLIDQAKEQMAKTVENTKENFSGIRTGRANPALLNGITVDYYGAPTPIKAVASIGVPEPRTLSVTPFDASQAGAVEKALRNSDLGISPNRDGNVIRLTMPELTEDRRKEYVKLAKGKAEDGKVAVRNIRRKTKETIDKAVKDGEMGEDEGDRLLKDLDKVTKSVTDEIDTLLETKQKEIMEV</sequence>
<accession>Q8G483</accession>
<gene>
    <name evidence="1" type="primary">frr</name>
    <name type="ordered locus">BL1506</name>
</gene>
<comment type="function">
    <text evidence="1">Responsible for the release of ribosomes from messenger RNA at the termination of protein biosynthesis. May increase the efficiency of translation by recycling ribosomes from one round of translation to another.</text>
</comment>
<comment type="subcellular location">
    <subcellularLocation>
        <location evidence="1">Cytoplasm</location>
    </subcellularLocation>
</comment>
<comment type="similarity">
    <text evidence="1">Belongs to the RRF family.</text>
</comment>
<proteinExistence type="inferred from homology"/>
<evidence type="ECO:0000255" key="1">
    <source>
        <dbReference type="HAMAP-Rule" id="MF_00040"/>
    </source>
</evidence>
<protein>
    <recommendedName>
        <fullName evidence="1">Ribosome-recycling factor</fullName>
        <shortName evidence="1">RRF</shortName>
    </recommendedName>
    <alternativeName>
        <fullName evidence="1">Ribosome-releasing factor</fullName>
    </alternativeName>
</protein>
<name>RRF_BIFLO</name>
<keyword id="KW-0963">Cytoplasm</keyword>
<keyword id="KW-0648">Protein biosynthesis</keyword>
<keyword id="KW-1185">Reference proteome</keyword>
<dbReference type="EMBL" id="AE014295">
    <property type="protein sequence ID" value="AAN25301.1"/>
    <property type="molecule type" value="Genomic_DNA"/>
</dbReference>
<dbReference type="RefSeq" id="NP_696665.1">
    <property type="nucleotide sequence ID" value="NC_004307.2"/>
</dbReference>
<dbReference type="RefSeq" id="WP_007052756.1">
    <property type="nucleotide sequence ID" value="NC_004307.2"/>
</dbReference>
<dbReference type="SMR" id="Q8G483"/>
<dbReference type="STRING" id="206672.BL1506"/>
<dbReference type="EnsemblBacteria" id="AAN25301">
    <property type="protein sequence ID" value="AAN25301"/>
    <property type="gene ID" value="BL1506"/>
</dbReference>
<dbReference type="GeneID" id="69578354"/>
<dbReference type="KEGG" id="blo:BL1506"/>
<dbReference type="PATRIC" id="fig|206672.9.peg.378"/>
<dbReference type="HOGENOM" id="CLU_073981_2_0_11"/>
<dbReference type="OrthoDB" id="9804006at2"/>
<dbReference type="PhylomeDB" id="Q8G483"/>
<dbReference type="Proteomes" id="UP000000439">
    <property type="component" value="Chromosome"/>
</dbReference>
<dbReference type="GO" id="GO:0005737">
    <property type="term" value="C:cytoplasm"/>
    <property type="evidence" value="ECO:0007669"/>
    <property type="project" value="UniProtKB-SubCell"/>
</dbReference>
<dbReference type="GO" id="GO:0043023">
    <property type="term" value="F:ribosomal large subunit binding"/>
    <property type="evidence" value="ECO:0007669"/>
    <property type="project" value="TreeGrafter"/>
</dbReference>
<dbReference type="GO" id="GO:0006415">
    <property type="term" value="P:translational termination"/>
    <property type="evidence" value="ECO:0007669"/>
    <property type="project" value="UniProtKB-UniRule"/>
</dbReference>
<dbReference type="CDD" id="cd00520">
    <property type="entry name" value="RRF"/>
    <property type="match status" value="1"/>
</dbReference>
<dbReference type="FunFam" id="1.10.132.20:FF:000001">
    <property type="entry name" value="Ribosome-recycling factor"/>
    <property type="match status" value="1"/>
</dbReference>
<dbReference type="FunFam" id="3.30.1360.40:FF:000001">
    <property type="entry name" value="Ribosome-recycling factor"/>
    <property type="match status" value="1"/>
</dbReference>
<dbReference type="Gene3D" id="3.30.1360.40">
    <property type="match status" value="1"/>
</dbReference>
<dbReference type="Gene3D" id="1.10.132.20">
    <property type="entry name" value="Ribosome-recycling factor"/>
    <property type="match status" value="1"/>
</dbReference>
<dbReference type="HAMAP" id="MF_00040">
    <property type="entry name" value="RRF"/>
    <property type="match status" value="1"/>
</dbReference>
<dbReference type="InterPro" id="IPR002661">
    <property type="entry name" value="Ribosome_recyc_fac"/>
</dbReference>
<dbReference type="InterPro" id="IPR023584">
    <property type="entry name" value="Ribosome_recyc_fac_dom"/>
</dbReference>
<dbReference type="InterPro" id="IPR036191">
    <property type="entry name" value="RRF_sf"/>
</dbReference>
<dbReference type="NCBIfam" id="TIGR00496">
    <property type="entry name" value="frr"/>
    <property type="match status" value="1"/>
</dbReference>
<dbReference type="PANTHER" id="PTHR20982:SF3">
    <property type="entry name" value="MITOCHONDRIAL RIBOSOME RECYCLING FACTOR PSEUDO 1"/>
    <property type="match status" value="1"/>
</dbReference>
<dbReference type="PANTHER" id="PTHR20982">
    <property type="entry name" value="RIBOSOME RECYCLING FACTOR"/>
    <property type="match status" value="1"/>
</dbReference>
<dbReference type="Pfam" id="PF01765">
    <property type="entry name" value="RRF"/>
    <property type="match status" value="1"/>
</dbReference>
<dbReference type="SUPFAM" id="SSF55194">
    <property type="entry name" value="Ribosome recycling factor, RRF"/>
    <property type="match status" value="1"/>
</dbReference>
<feature type="chain" id="PRO_0000167418" description="Ribosome-recycling factor">
    <location>
        <begin position="1"/>
        <end position="183"/>
    </location>
</feature>